<gene>
    <name type="ordered locus">TK1782</name>
</gene>
<organism>
    <name type="scientific">Thermococcus kodakarensis (strain ATCC BAA-918 / JCM 12380 / KOD1)</name>
    <name type="common">Pyrococcus kodakaraensis (strain KOD1)</name>
    <dbReference type="NCBI Taxonomy" id="69014"/>
    <lineage>
        <taxon>Archaea</taxon>
        <taxon>Methanobacteriati</taxon>
        <taxon>Methanobacteriota</taxon>
        <taxon>Thermococci</taxon>
        <taxon>Thermococcales</taxon>
        <taxon>Thermococcaceae</taxon>
        <taxon>Thermococcus</taxon>
    </lineage>
</organism>
<proteinExistence type="inferred from homology"/>
<protein>
    <recommendedName>
        <fullName>Uncharacterized serpin-like protein TK1782</fullName>
    </recommendedName>
</protein>
<dbReference type="EMBL" id="AP006878">
    <property type="protein sequence ID" value="BAD85971.1"/>
    <property type="molecule type" value="Genomic_DNA"/>
</dbReference>
<dbReference type="RefSeq" id="WP_011250733.1">
    <property type="nucleotide sequence ID" value="NC_006624.1"/>
</dbReference>
<dbReference type="SMR" id="Q5JJ64"/>
<dbReference type="STRING" id="69014.TK1782"/>
<dbReference type="MEROPS" id="I04.089"/>
<dbReference type="EnsemblBacteria" id="BAD85971">
    <property type="protein sequence ID" value="BAD85971"/>
    <property type="gene ID" value="TK1782"/>
</dbReference>
<dbReference type="GeneID" id="78448312"/>
<dbReference type="KEGG" id="tko:TK1782"/>
<dbReference type="PATRIC" id="fig|69014.16.peg.1738"/>
<dbReference type="eggNOG" id="arCOG04933">
    <property type="taxonomic scope" value="Archaea"/>
</dbReference>
<dbReference type="HOGENOM" id="CLU_023330_0_1_2"/>
<dbReference type="InParanoid" id="Q5JJ64"/>
<dbReference type="OrthoDB" id="371710at2157"/>
<dbReference type="PhylomeDB" id="Q5JJ64"/>
<dbReference type="Proteomes" id="UP000000536">
    <property type="component" value="Chromosome"/>
</dbReference>
<dbReference type="GO" id="GO:0005615">
    <property type="term" value="C:extracellular space"/>
    <property type="evidence" value="ECO:0000318"/>
    <property type="project" value="GO_Central"/>
</dbReference>
<dbReference type="GO" id="GO:0004867">
    <property type="term" value="F:serine-type endopeptidase inhibitor activity"/>
    <property type="evidence" value="ECO:0007669"/>
    <property type="project" value="UniProtKB-KW"/>
</dbReference>
<dbReference type="CDD" id="cd19590">
    <property type="entry name" value="serpin_thermopin-like"/>
    <property type="match status" value="1"/>
</dbReference>
<dbReference type="FunFam" id="2.10.310.10:FF:000001">
    <property type="entry name" value="Serpin family A member 1"/>
    <property type="match status" value="1"/>
</dbReference>
<dbReference type="Gene3D" id="2.30.39.10">
    <property type="entry name" value="Alpha-1-antitrypsin, domain 1"/>
    <property type="match status" value="1"/>
</dbReference>
<dbReference type="Gene3D" id="3.30.497.10">
    <property type="entry name" value="Antithrombin, subunit I, domain 2"/>
    <property type="match status" value="1"/>
</dbReference>
<dbReference type="InterPro" id="IPR023795">
    <property type="entry name" value="Serpin_CS"/>
</dbReference>
<dbReference type="InterPro" id="IPR023796">
    <property type="entry name" value="Serpin_dom"/>
</dbReference>
<dbReference type="InterPro" id="IPR000215">
    <property type="entry name" value="Serpin_fam"/>
</dbReference>
<dbReference type="InterPro" id="IPR036186">
    <property type="entry name" value="Serpin_sf"/>
</dbReference>
<dbReference type="InterPro" id="IPR042178">
    <property type="entry name" value="Serpin_sf_1"/>
</dbReference>
<dbReference type="InterPro" id="IPR042185">
    <property type="entry name" value="Serpin_sf_2"/>
</dbReference>
<dbReference type="PANTHER" id="PTHR11461:SF211">
    <property type="entry name" value="GH10112P-RELATED"/>
    <property type="match status" value="1"/>
</dbReference>
<dbReference type="PANTHER" id="PTHR11461">
    <property type="entry name" value="SERINE PROTEASE INHIBITOR, SERPIN"/>
    <property type="match status" value="1"/>
</dbReference>
<dbReference type="Pfam" id="PF00079">
    <property type="entry name" value="Serpin"/>
    <property type="match status" value="1"/>
</dbReference>
<dbReference type="SMART" id="SM00093">
    <property type="entry name" value="SERPIN"/>
    <property type="match status" value="1"/>
</dbReference>
<dbReference type="SUPFAM" id="SSF56574">
    <property type="entry name" value="Serpins"/>
    <property type="match status" value="1"/>
</dbReference>
<dbReference type="PROSITE" id="PS51257">
    <property type="entry name" value="PROKAR_LIPOPROTEIN"/>
    <property type="match status" value="1"/>
</dbReference>
<dbReference type="PROSITE" id="PS00284">
    <property type="entry name" value="SERPIN"/>
    <property type="match status" value="1"/>
</dbReference>
<comment type="similarity">
    <text evidence="3">Belongs to the serpin family.</text>
</comment>
<sequence>MRRTVLLVTVLLVFIGGCLGQMENPRPTNNPSTSHPSDSYSTLPTTKYDVLKEGQEKPVVNAINSFTFDLYKELAGNNNNVFFSPFSIETALAMAYEGARGKTAEEMKRVLHLPEDDDARWTGFRYLLLSLKSPEGSPFILRSVNALWVQRGYSLREEYLGIVKEFYLGEAKEVDFQGNPAEAAREINEWVEEQTNGRIKDIVSGLSPLTRLVITNAVYFKANWSSRFRASDTRNETFHAPNGTVIVPMMHQTGEFPYFENDDLQALELPYEGERLGMLIILPKEGKFEKVEGNLSAGSIENILKNMREEKVKVALPKFRFEASYKLRDVLMDMGMKRAFLVPDFSGISNGENLAIEDVVHKSFISVAENGTEAAAATAVTLTMNAPMQEKEPKIFKADHPFIFFIYDRETGTILFMGRMMNPKDG</sequence>
<reference key="1">
    <citation type="journal article" date="2005" name="Genome Res.">
        <title>Complete genome sequence of the hyperthermophilic archaeon Thermococcus kodakaraensis KOD1 and comparison with Pyrococcus genomes.</title>
        <authorList>
            <person name="Fukui T."/>
            <person name="Atomi H."/>
            <person name="Kanai T."/>
            <person name="Matsumi R."/>
            <person name="Fujiwara S."/>
            <person name="Imanaka T."/>
        </authorList>
    </citation>
    <scope>NUCLEOTIDE SEQUENCE [LARGE SCALE GENOMIC DNA]</scope>
    <source>
        <strain>ATCC BAA-918 / JCM 12380 / KOD1</strain>
    </source>
</reference>
<keyword id="KW-0646">Protease inhibitor</keyword>
<keyword id="KW-1185">Reference proteome</keyword>
<keyword id="KW-0722">Serine protease inhibitor</keyword>
<name>Y1782_THEKO</name>
<feature type="chain" id="PRO_0000094165" description="Uncharacterized serpin-like protein TK1782">
    <location>
        <begin position="1"/>
        <end position="426"/>
    </location>
</feature>
<feature type="region of interest" description="Disordered" evidence="2">
    <location>
        <begin position="23"/>
        <end position="42"/>
    </location>
</feature>
<feature type="compositionally biased region" description="Polar residues" evidence="2">
    <location>
        <begin position="26"/>
        <end position="42"/>
    </location>
</feature>
<feature type="site" description="Reactive bond" evidence="1">
    <location>
        <begin position="385"/>
        <end position="386"/>
    </location>
</feature>
<accession>Q5JJ64</accession>
<evidence type="ECO:0000255" key="1"/>
<evidence type="ECO:0000256" key="2">
    <source>
        <dbReference type="SAM" id="MobiDB-lite"/>
    </source>
</evidence>
<evidence type="ECO:0000305" key="3"/>